<dbReference type="EMBL" id="CP001098">
    <property type="protein sequence ID" value="ACL68893.1"/>
    <property type="molecule type" value="Genomic_DNA"/>
</dbReference>
<dbReference type="RefSeq" id="WP_012635091.1">
    <property type="nucleotide sequence ID" value="NC_011899.1"/>
</dbReference>
<dbReference type="SMR" id="B8D0D9"/>
<dbReference type="STRING" id="373903.Hore_01320"/>
<dbReference type="KEGG" id="hor:Hore_01320"/>
<dbReference type="eggNOG" id="COG0097">
    <property type="taxonomic scope" value="Bacteria"/>
</dbReference>
<dbReference type="HOGENOM" id="CLU_065464_1_2_9"/>
<dbReference type="OrthoDB" id="9805007at2"/>
<dbReference type="Proteomes" id="UP000000719">
    <property type="component" value="Chromosome"/>
</dbReference>
<dbReference type="GO" id="GO:0022625">
    <property type="term" value="C:cytosolic large ribosomal subunit"/>
    <property type="evidence" value="ECO:0007669"/>
    <property type="project" value="TreeGrafter"/>
</dbReference>
<dbReference type="GO" id="GO:0019843">
    <property type="term" value="F:rRNA binding"/>
    <property type="evidence" value="ECO:0007669"/>
    <property type="project" value="UniProtKB-UniRule"/>
</dbReference>
<dbReference type="GO" id="GO:0003735">
    <property type="term" value="F:structural constituent of ribosome"/>
    <property type="evidence" value="ECO:0007669"/>
    <property type="project" value="InterPro"/>
</dbReference>
<dbReference type="GO" id="GO:0002181">
    <property type="term" value="P:cytoplasmic translation"/>
    <property type="evidence" value="ECO:0007669"/>
    <property type="project" value="TreeGrafter"/>
</dbReference>
<dbReference type="FunFam" id="3.90.930.12:FF:000001">
    <property type="entry name" value="50S ribosomal protein L6"/>
    <property type="match status" value="1"/>
</dbReference>
<dbReference type="FunFam" id="3.90.930.12:FF:000002">
    <property type="entry name" value="50S ribosomal protein L6"/>
    <property type="match status" value="1"/>
</dbReference>
<dbReference type="Gene3D" id="3.90.930.12">
    <property type="entry name" value="Ribosomal protein L6, alpha-beta domain"/>
    <property type="match status" value="2"/>
</dbReference>
<dbReference type="HAMAP" id="MF_01365_B">
    <property type="entry name" value="Ribosomal_uL6_B"/>
    <property type="match status" value="1"/>
</dbReference>
<dbReference type="InterPro" id="IPR000702">
    <property type="entry name" value="Ribosomal_uL6-like"/>
</dbReference>
<dbReference type="InterPro" id="IPR036789">
    <property type="entry name" value="Ribosomal_uL6-like_a/b-dom_sf"/>
</dbReference>
<dbReference type="InterPro" id="IPR020040">
    <property type="entry name" value="Ribosomal_uL6_a/b-dom"/>
</dbReference>
<dbReference type="InterPro" id="IPR019906">
    <property type="entry name" value="Ribosomal_uL6_bac-type"/>
</dbReference>
<dbReference type="InterPro" id="IPR002358">
    <property type="entry name" value="Ribosomal_uL6_CS"/>
</dbReference>
<dbReference type="NCBIfam" id="TIGR03654">
    <property type="entry name" value="L6_bact"/>
    <property type="match status" value="1"/>
</dbReference>
<dbReference type="PANTHER" id="PTHR11655">
    <property type="entry name" value="60S/50S RIBOSOMAL PROTEIN L6/L9"/>
    <property type="match status" value="1"/>
</dbReference>
<dbReference type="PANTHER" id="PTHR11655:SF14">
    <property type="entry name" value="LARGE RIBOSOMAL SUBUNIT PROTEIN UL6M"/>
    <property type="match status" value="1"/>
</dbReference>
<dbReference type="Pfam" id="PF00347">
    <property type="entry name" value="Ribosomal_L6"/>
    <property type="match status" value="2"/>
</dbReference>
<dbReference type="PIRSF" id="PIRSF002162">
    <property type="entry name" value="Ribosomal_L6"/>
    <property type="match status" value="1"/>
</dbReference>
<dbReference type="PRINTS" id="PR00059">
    <property type="entry name" value="RIBOSOMALL6"/>
</dbReference>
<dbReference type="SUPFAM" id="SSF56053">
    <property type="entry name" value="Ribosomal protein L6"/>
    <property type="match status" value="2"/>
</dbReference>
<dbReference type="PROSITE" id="PS00525">
    <property type="entry name" value="RIBOSOMAL_L6_1"/>
    <property type="match status" value="1"/>
</dbReference>
<reference key="1">
    <citation type="journal article" date="2009" name="PLoS ONE">
        <title>Genome analysis of the anaerobic thermohalophilic bacterium Halothermothrix orenii.</title>
        <authorList>
            <person name="Mavromatis K."/>
            <person name="Ivanova N."/>
            <person name="Anderson I."/>
            <person name="Lykidis A."/>
            <person name="Hooper S.D."/>
            <person name="Sun H."/>
            <person name="Kunin V."/>
            <person name="Lapidus A."/>
            <person name="Hugenholtz P."/>
            <person name="Patel B."/>
            <person name="Kyrpides N.C."/>
        </authorList>
    </citation>
    <scope>NUCLEOTIDE SEQUENCE [LARGE SCALE GENOMIC DNA]</scope>
    <source>
        <strain>H 168 / OCM 544 / DSM 9562</strain>
    </source>
</reference>
<accession>B8D0D9</accession>
<gene>
    <name evidence="1" type="primary">rplF</name>
    <name type="ordered locus">Hore_01320</name>
</gene>
<evidence type="ECO:0000255" key="1">
    <source>
        <dbReference type="HAMAP-Rule" id="MF_01365"/>
    </source>
</evidence>
<evidence type="ECO:0000305" key="2"/>
<proteinExistence type="inferred from homology"/>
<feature type="chain" id="PRO_1000166814" description="Large ribosomal subunit protein uL6">
    <location>
        <begin position="1"/>
        <end position="179"/>
    </location>
</feature>
<comment type="function">
    <text evidence="1">This protein binds to the 23S rRNA, and is important in its secondary structure. It is located near the subunit interface in the base of the L7/L12 stalk, and near the tRNA binding site of the peptidyltransferase center.</text>
</comment>
<comment type="subunit">
    <text evidence="1">Part of the 50S ribosomal subunit.</text>
</comment>
<comment type="similarity">
    <text evidence="1">Belongs to the universal ribosomal protein uL6 family.</text>
</comment>
<protein>
    <recommendedName>
        <fullName evidence="1">Large ribosomal subunit protein uL6</fullName>
    </recommendedName>
    <alternativeName>
        <fullName evidence="2">50S ribosomal protein L6</fullName>
    </alternativeName>
</protein>
<keyword id="KW-1185">Reference proteome</keyword>
<keyword id="KW-0687">Ribonucleoprotein</keyword>
<keyword id="KW-0689">Ribosomal protein</keyword>
<keyword id="KW-0694">RNA-binding</keyword>
<keyword id="KW-0699">rRNA-binding</keyword>
<name>RL6_HALOH</name>
<sequence>MSRIGKLPVDIPEKVDVSVNDNLVTVKGPKGELTKEFNNKKVTVEVKDGQVLVRRVHDKDKDARAFQGLTRSLIDSMVEGVTNGFEKKLEMVGVGYNAKKKGKDLELEVGYSHPVIIEAEDGIEFDVEKNNKIVVRGIDKQQVGEMAAKVRAVRKPEPYKGKGIRYEGEHIRRKEGKTG</sequence>
<organism>
    <name type="scientific">Halothermothrix orenii (strain H 168 / OCM 544 / DSM 9562)</name>
    <dbReference type="NCBI Taxonomy" id="373903"/>
    <lineage>
        <taxon>Bacteria</taxon>
        <taxon>Bacillati</taxon>
        <taxon>Bacillota</taxon>
        <taxon>Clostridia</taxon>
        <taxon>Halanaerobiales</taxon>
        <taxon>Halothermotrichaceae</taxon>
        <taxon>Halothermothrix</taxon>
    </lineage>
</organism>